<proteinExistence type="evidence at transcript level"/>
<name>CK068_BOVIN</name>
<protein>
    <recommendedName>
        <fullName>UPF0696 protein C11orf68 homolog</fullName>
    </recommendedName>
</protein>
<reference key="1">
    <citation type="submission" date="2007-03" db="EMBL/GenBank/DDBJ databases">
        <authorList>
            <consortium name="NIH - Mammalian Gene Collection (MGC) project"/>
        </authorList>
    </citation>
    <scope>NUCLEOTIDE SEQUENCE [LARGE SCALE MRNA]</scope>
    <source>
        <strain>Hereford</strain>
        <tissue>Ascending colon</tissue>
    </source>
</reference>
<comment type="similarity">
    <text evidence="2">Belongs to the UPF0696 family.</text>
</comment>
<comment type="sequence caution" evidence="2">
    <conflict type="erroneous initiation">
        <sequence resource="EMBL-CDS" id="AAI34486"/>
    </conflict>
    <text>Truncated N-terminus.</text>
</comment>
<feature type="chain" id="PRO_0000359889" description="UPF0696 protein C11orf68 homolog">
    <location>
        <begin position="1"/>
        <end position="292"/>
    </location>
</feature>
<feature type="region of interest" description="Disordered" evidence="1">
    <location>
        <begin position="1"/>
        <end position="60"/>
    </location>
</feature>
<feature type="compositionally biased region" description="Low complexity" evidence="1">
    <location>
        <begin position="1"/>
        <end position="10"/>
    </location>
</feature>
<feature type="compositionally biased region" description="Basic and acidic residues" evidence="1">
    <location>
        <begin position="35"/>
        <end position="44"/>
    </location>
</feature>
<dbReference type="EMBL" id="BC134485">
    <property type="protein sequence ID" value="AAI34486.1"/>
    <property type="status" value="ALT_INIT"/>
    <property type="molecule type" value="mRNA"/>
</dbReference>
<dbReference type="RefSeq" id="NP_001098950.2">
    <property type="nucleotide sequence ID" value="NM_001105480.2"/>
</dbReference>
<dbReference type="SMR" id="A4IFA8"/>
<dbReference type="FunCoup" id="A4IFA8">
    <property type="interactions" value="2215"/>
</dbReference>
<dbReference type="STRING" id="9913.ENSBTAP00000008137"/>
<dbReference type="PaxDb" id="9913-ENSBTAP00000008137"/>
<dbReference type="Ensembl" id="ENSBTAT00000008137.5">
    <property type="protein sequence ID" value="ENSBTAP00000008137.3"/>
    <property type="gene ID" value="ENSBTAG00000006195.5"/>
</dbReference>
<dbReference type="GeneID" id="100125880"/>
<dbReference type="KEGG" id="bta:100125880"/>
<dbReference type="CTD" id="100125880"/>
<dbReference type="VEuPathDB" id="HostDB:ENSBTAG00000006195"/>
<dbReference type="VGNC" id="VGNC:56258">
    <property type="gene designation" value="C29H11orf68"/>
</dbReference>
<dbReference type="eggNOG" id="ENOG502QRQJ">
    <property type="taxonomic scope" value="Eukaryota"/>
</dbReference>
<dbReference type="GeneTree" id="ENSGT00390000011640"/>
<dbReference type="HOGENOM" id="CLU_051869_1_0_1"/>
<dbReference type="InParanoid" id="A4IFA8"/>
<dbReference type="OMA" id="WIAIYGP"/>
<dbReference type="OrthoDB" id="10067381at2759"/>
<dbReference type="Proteomes" id="UP000009136">
    <property type="component" value="Chromosome 29"/>
</dbReference>
<dbReference type="Bgee" id="ENSBTAG00000006195">
    <property type="expression patterns" value="Expressed in laryngeal cartilage and 105 other cell types or tissues"/>
</dbReference>
<dbReference type="FunFam" id="3.30.760.10:FF:000005">
    <property type="entry name" value="UPF0696 protein C11orf68 homolog"/>
    <property type="match status" value="1"/>
</dbReference>
<dbReference type="Gene3D" id="3.30.760.10">
    <property type="entry name" value="RNA Cap, Translation Initiation Factor Eif4e"/>
    <property type="match status" value="1"/>
</dbReference>
<dbReference type="InterPro" id="IPR015034">
    <property type="entry name" value="Bles03"/>
</dbReference>
<dbReference type="InterPro" id="IPR023398">
    <property type="entry name" value="TIF_eIF4e-like"/>
</dbReference>
<dbReference type="PANTHER" id="PTHR31977">
    <property type="entry name" value="UPF0696 PROTEIN C11ORF68"/>
    <property type="match status" value="1"/>
</dbReference>
<dbReference type="PANTHER" id="PTHR31977:SF1">
    <property type="entry name" value="UPF0696 PROTEIN C11ORF68"/>
    <property type="match status" value="1"/>
</dbReference>
<dbReference type="Pfam" id="PF08939">
    <property type="entry name" value="Bles03"/>
    <property type="match status" value="1"/>
</dbReference>
<dbReference type="SUPFAM" id="SSF55418">
    <property type="entry name" value="eIF4e-like"/>
    <property type="match status" value="1"/>
</dbReference>
<accession>A4IFA8</accession>
<sequence length="292" mass="31403">MAAAAAAVAGAGRGGGGGAEPRQERSRARGWAGAERSEGRRMEPGEELEEEDSPGGREDGFTAEHLAAEAMAADMDPWLVFDARMTPATELDAWLAKYPPSQVTRYGDPGSPNSEPVGWIAAYGQGYIPNSGDVQGLQAAWEALQTSGRPVTPGTLRQLAITHQVLSGKWLIHLAPGFKLDHAWAGIARAVVEGRLQVAKVSPRAKEGGRQVICVYTDDFTDRLGVLEADAAIRAAGVKCLLTYKPDVYTYLGIYRANRWHLCPTLYESRFQLGGSARGSRVLDRANNVELT</sequence>
<organism>
    <name type="scientific">Bos taurus</name>
    <name type="common">Bovine</name>
    <dbReference type="NCBI Taxonomy" id="9913"/>
    <lineage>
        <taxon>Eukaryota</taxon>
        <taxon>Metazoa</taxon>
        <taxon>Chordata</taxon>
        <taxon>Craniata</taxon>
        <taxon>Vertebrata</taxon>
        <taxon>Euteleostomi</taxon>
        <taxon>Mammalia</taxon>
        <taxon>Eutheria</taxon>
        <taxon>Laurasiatheria</taxon>
        <taxon>Artiodactyla</taxon>
        <taxon>Ruminantia</taxon>
        <taxon>Pecora</taxon>
        <taxon>Bovidae</taxon>
        <taxon>Bovinae</taxon>
        <taxon>Bos</taxon>
    </lineage>
</organism>
<evidence type="ECO:0000256" key="1">
    <source>
        <dbReference type="SAM" id="MobiDB-lite"/>
    </source>
</evidence>
<evidence type="ECO:0000305" key="2"/>
<keyword id="KW-1185">Reference proteome</keyword>